<evidence type="ECO:0000255" key="1">
    <source>
        <dbReference type="PROSITE-ProRule" id="PRU00353"/>
    </source>
</evidence>
<evidence type="ECO:0000256" key="2">
    <source>
        <dbReference type="SAM" id="MobiDB-lite"/>
    </source>
</evidence>
<evidence type="ECO:0000305" key="3"/>
<keyword id="KW-0238">DNA-binding</keyword>
<keyword id="KW-0539">Nucleus</keyword>
<keyword id="KW-1185">Reference proteome</keyword>
<keyword id="KW-0804">Transcription</keyword>
<keyword id="KW-0805">Transcription regulation</keyword>
<proteinExistence type="evidence at transcript level"/>
<reference key="1">
    <citation type="journal article" date="2000" name="Nature">
        <title>Sequence and analysis of chromosome 1 of the plant Arabidopsis thaliana.</title>
        <authorList>
            <person name="Theologis A."/>
            <person name="Ecker J.R."/>
            <person name="Palm C.J."/>
            <person name="Federspiel N.A."/>
            <person name="Kaul S."/>
            <person name="White O."/>
            <person name="Alonso J."/>
            <person name="Altafi H."/>
            <person name="Araujo R."/>
            <person name="Bowman C.L."/>
            <person name="Brooks S.Y."/>
            <person name="Buehler E."/>
            <person name="Chan A."/>
            <person name="Chao Q."/>
            <person name="Chen H."/>
            <person name="Cheuk R.F."/>
            <person name="Chin C.W."/>
            <person name="Chung M.K."/>
            <person name="Conn L."/>
            <person name="Conway A.B."/>
            <person name="Conway A.R."/>
            <person name="Creasy T.H."/>
            <person name="Dewar K."/>
            <person name="Dunn P."/>
            <person name="Etgu P."/>
            <person name="Feldblyum T.V."/>
            <person name="Feng J.-D."/>
            <person name="Fong B."/>
            <person name="Fujii C.Y."/>
            <person name="Gill J.E."/>
            <person name="Goldsmith A.D."/>
            <person name="Haas B."/>
            <person name="Hansen N.F."/>
            <person name="Hughes B."/>
            <person name="Huizar L."/>
            <person name="Hunter J.L."/>
            <person name="Jenkins J."/>
            <person name="Johnson-Hopson C."/>
            <person name="Khan S."/>
            <person name="Khaykin E."/>
            <person name="Kim C.J."/>
            <person name="Koo H.L."/>
            <person name="Kremenetskaia I."/>
            <person name="Kurtz D.B."/>
            <person name="Kwan A."/>
            <person name="Lam B."/>
            <person name="Langin-Hooper S."/>
            <person name="Lee A."/>
            <person name="Lee J.M."/>
            <person name="Lenz C.A."/>
            <person name="Li J.H."/>
            <person name="Li Y.-P."/>
            <person name="Lin X."/>
            <person name="Liu S.X."/>
            <person name="Liu Z.A."/>
            <person name="Luros J.S."/>
            <person name="Maiti R."/>
            <person name="Marziali A."/>
            <person name="Militscher J."/>
            <person name="Miranda M."/>
            <person name="Nguyen M."/>
            <person name="Nierman W.C."/>
            <person name="Osborne B.I."/>
            <person name="Pai G."/>
            <person name="Peterson J."/>
            <person name="Pham P.K."/>
            <person name="Rizzo M."/>
            <person name="Rooney T."/>
            <person name="Rowley D."/>
            <person name="Sakano H."/>
            <person name="Salzberg S.L."/>
            <person name="Schwartz J.R."/>
            <person name="Shinn P."/>
            <person name="Southwick A.M."/>
            <person name="Sun H."/>
            <person name="Tallon L.J."/>
            <person name="Tambunga G."/>
            <person name="Toriumi M.J."/>
            <person name="Town C.D."/>
            <person name="Utterback T."/>
            <person name="Van Aken S."/>
            <person name="Vaysberg M."/>
            <person name="Vysotskaia V.S."/>
            <person name="Walker M."/>
            <person name="Wu D."/>
            <person name="Yu G."/>
            <person name="Fraser C.M."/>
            <person name="Venter J.C."/>
            <person name="Davis R.W."/>
        </authorList>
    </citation>
    <scope>NUCLEOTIDE SEQUENCE [LARGE SCALE GENOMIC DNA]</scope>
    <source>
        <strain>cv. Columbia</strain>
    </source>
</reference>
<reference key="2">
    <citation type="journal article" date="2017" name="Plant J.">
        <title>Araport11: a complete reannotation of the Arabidopsis thaliana reference genome.</title>
        <authorList>
            <person name="Cheng C.Y."/>
            <person name="Krishnakumar V."/>
            <person name="Chan A.P."/>
            <person name="Thibaud-Nissen F."/>
            <person name="Schobel S."/>
            <person name="Town C.D."/>
        </authorList>
    </citation>
    <scope>GENOME REANNOTATION</scope>
    <source>
        <strain>cv. Columbia</strain>
    </source>
</reference>
<reference key="3">
    <citation type="submission" date="2009-03" db="EMBL/GenBank/DDBJ databases">
        <title>ORF cloning and analysis of Arabidopsis transcription factor genes.</title>
        <authorList>
            <person name="Fujita M."/>
            <person name="Mizukado S."/>
            <person name="Seki M."/>
            <person name="Shinozaki K."/>
            <person name="Mitsuda N."/>
            <person name="Takiguchi Y."/>
            <person name="Takagi M."/>
        </authorList>
    </citation>
    <scope>NUCLEOTIDE SEQUENCE [LARGE SCALE MRNA]</scope>
</reference>
<reference key="4">
    <citation type="journal article" date="2003" name="DNA Res.">
        <title>Comprehensive analysis of NAC family genes in Oryza sativa and Arabidopsis thaliana.</title>
        <authorList>
            <person name="Ooka H."/>
            <person name="Satoh K."/>
            <person name="Doi K."/>
            <person name="Nagata T."/>
            <person name="Otomo Y."/>
            <person name="Murakami K."/>
            <person name="Matsubara K."/>
            <person name="Osato N."/>
            <person name="Kawai J."/>
            <person name="Carninci P."/>
            <person name="Hayashizaki Y."/>
            <person name="Suzuki K."/>
            <person name="Kojima K."/>
            <person name="Takahara Y."/>
            <person name="Yamamoto K."/>
            <person name="Kikuchi S."/>
        </authorList>
    </citation>
    <scope>GENE FAMILY</scope>
    <scope>NOMENCLATURE</scope>
</reference>
<name>NAC5_ARATH</name>
<sequence>MANPVGFRFRPTDGEIVDIYLRPKNLESNTSHVDEVISTVDICSFDPWDLPSHSRMKTRDQVWYFFGRKENKYGKGDRQIRKTKSGFWKKTGVTMDIMRKTGDREKIGEKRVLVFKNHGGSKSDWAMHEYHATFSSPNQIMTYTLCKVKFKGERREFSVATGSGIKHTHSLIPPTNNSGVLSVETEGSLFHSQESQNPSQFSGFLDVDALDRDFCNILSDDFKGFFNDDDEQSKIVSMQDDRNNHTPQKPLTGVFSDHSTDGSDSDPISATTISIQTLSTCPSFGSSNPLYQITDLQESPNSIKLVSLAQEVSKTPGTGIDNDAQGTEIGEHKLGQETIKNKRAGFFHRMIQKFVKKIHLRT</sequence>
<protein>
    <recommendedName>
        <fullName>NAC domain-containing protein 5</fullName>
        <shortName>ANAC005</shortName>
    </recommendedName>
</protein>
<comment type="subcellular location">
    <subcellularLocation>
        <location evidence="3">Nucleus</location>
    </subcellularLocation>
</comment>
<comment type="domain">
    <text>The NAC domain includes a DNA-binding domain and a dimerization domain.</text>
</comment>
<comment type="sequence caution" evidence="3">
    <conflict type="erroneous gene model prediction">
        <sequence resource="EMBL-CDS" id="AAC24384"/>
    </conflict>
</comment>
<organism>
    <name type="scientific">Arabidopsis thaliana</name>
    <name type="common">Mouse-ear cress</name>
    <dbReference type="NCBI Taxonomy" id="3702"/>
    <lineage>
        <taxon>Eukaryota</taxon>
        <taxon>Viridiplantae</taxon>
        <taxon>Streptophyta</taxon>
        <taxon>Embryophyta</taxon>
        <taxon>Tracheophyta</taxon>
        <taxon>Spermatophyta</taxon>
        <taxon>Magnoliopsida</taxon>
        <taxon>eudicotyledons</taxon>
        <taxon>Gunneridae</taxon>
        <taxon>Pentapetalae</taxon>
        <taxon>rosids</taxon>
        <taxon>malvids</taxon>
        <taxon>Brassicales</taxon>
        <taxon>Brassicaceae</taxon>
        <taxon>Camelineae</taxon>
        <taxon>Arabidopsis</taxon>
    </lineage>
</organism>
<accession>O81914</accession>
<accession>C0SUS2</accession>
<gene>
    <name type="primary">NAC005</name>
    <name type="ordered locus">At1g02250</name>
    <name type="ORF">T7I23.20</name>
</gene>
<dbReference type="EMBL" id="U89959">
    <property type="protein sequence ID" value="AAC24384.1"/>
    <property type="status" value="ALT_SEQ"/>
    <property type="molecule type" value="Genomic_DNA"/>
</dbReference>
<dbReference type="EMBL" id="CP002684">
    <property type="protein sequence ID" value="AEE27406.1"/>
    <property type="molecule type" value="Genomic_DNA"/>
</dbReference>
<dbReference type="EMBL" id="AB493425">
    <property type="protein sequence ID" value="BAH30263.1"/>
    <property type="molecule type" value="mRNA"/>
</dbReference>
<dbReference type="RefSeq" id="NP_171727.2">
    <property type="nucleotide sequence ID" value="NM_100105.3"/>
</dbReference>
<dbReference type="SMR" id="O81914"/>
<dbReference type="STRING" id="3702.O81914"/>
<dbReference type="PaxDb" id="3702-AT1G02250.1"/>
<dbReference type="EnsemblPlants" id="AT1G02250.1">
    <property type="protein sequence ID" value="AT1G02250.1"/>
    <property type="gene ID" value="AT1G02250"/>
</dbReference>
<dbReference type="GeneID" id="839390"/>
<dbReference type="Gramene" id="AT1G02250.1">
    <property type="protein sequence ID" value="AT1G02250.1"/>
    <property type="gene ID" value="AT1G02250"/>
</dbReference>
<dbReference type="KEGG" id="ath:AT1G02250"/>
<dbReference type="Araport" id="AT1G02250"/>
<dbReference type="TAIR" id="AT1G02250">
    <property type="gene designation" value="NAC005"/>
</dbReference>
<dbReference type="HOGENOM" id="CLU_035664_9_3_1"/>
<dbReference type="InParanoid" id="O81914"/>
<dbReference type="OMA" id="AMHEYHA"/>
<dbReference type="PhylomeDB" id="O81914"/>
<dbReference type="PRO" id="PR:O81914"/>
<dbReference type="Proteomes" id="UP000006548">
    <property type="component" value="Chromosome 1"/>
</dbReference>
<dbReference type="ExpressionAtlas" id="O81914">
    <property type="expression patterns" value="baseline and differential"/>
</dbReference>
<dbReference type="GO" id="GO:0005634">
    <property type="term" value="C:nucleus"/>
    <property type="evidence" value="ECO:0000314"/>
    <property type="project" value="TAIR"/>
</dbReference>
<dbReference type="GO" id="GO:0005886">
    <property type="term" value="C:plasma membrane"/>
    <property type="evidence" value="ECO:0000314"/>
    <property type="project" value="TAIR"/>
</dbReference>
<dbReference type="GO" id="GO:0003677">
    <property type="term" value="F:DNA binding"/>
    <property type="evidence" value="ECO:0007669"/>
    <property type="project" value="UniProtKB-KW"/>
</dbReference>
<dbReference type="GO" id="GO:0003700">
    <property type="term" value="F:DNA-binding transcription factor activity"/>
    <property type="evidence" value="ECO:0000250"/>
    <property type="project" value="TAIR"/>
</dbReference>
<dbReference type="GO" id="GO:0010089">
    <property type="term" value="P:xylem development"/>
    <property type="evidence" value="ECO:0000315"/>
    <property type="project" value="TAIR"/>
</dbReference>
<dbReference type="FunFam" id="2.170.150.80:FF:000012">
    <property type="entry name" value="NAC with transmembrane motif1"/>
    <property type="match status" value="1"/>
</dbReference>
<dbReference type="Gene3D" id="2.170.150.80">
    <property type="entry name" value="NAC domain"/>
    <property type="match status" value="1"/>
</dbReference>
<dbReference type="InterPro" id="IPR003441">
    <property type="entry name" value="NAC-dom"/>
</dbReference>
<dbReference type="InterPro" id="IPR036093">
    <property type="entry name" value="NAC_dom_sf"/>
</dbReference>
<dbReference type="PANTHER" id="PTHR31989">
    <property type="entry name" value="NAC DOMAIN-CONTAINING PROTEIN 82-RELATED"/>
    <property type="match status" value="1"/>
</dbReference>
<dbReference type="Pfam" id="PF02365">
    <property type="entry name" value="NAM"/>
    <property type="match status" value="1"/>
</dbReference>
<dbReference type="SUPFAM" id="SSF101941">
    <property type="entry name" value="NAC domain"/>
    <property type="match status" value="1"/>
</dbReference>
<dbReference type="PROSITE" id="PS51005">
    <property type="entry name" value="NAC"/>
    <property type="match status" value="1"/>
</dbReference>
<feature type="chain" id="PRO_0000376613" description="NAC domain-containing protein 5">
    <location>
        <begin position="1"/>
        <end position="362"/>
    </location>
</feature>
<feature type="domain" description="NAC" evidence="1">
    <location>
        <begin position="3"/>
        <end position="151"/>
    </location>
</feature>
<feature type="DNA-binding region" evidence="1">
    <location>
        <begin position="107"/>
        <end position="157"/>
    </location>
</feature>
<feature type="region of interest" description="Disordered" evidence="2">
    <location>
        <begin position="240"/>
        <end position="266"/>
    </location>
</feature>